<dbReference type="EC" id="1.5.1.5" evidence="1"/>
<dbReference type="EC" id="3.5.4.9" evidence="1"/>
<dbReference type="EMBL" id="CP000448">
    <property type="protein sequence ID" value="ABI67899.1"/>
    <property type="molecule type" value="Genomic_DNA"/>
</dbReference>
<dbReference type="RefSeq" id="WP_011640004.1">
    <property type="nucleotide sequence ID" value="NC_008346.1"/>
</dbReference>
<dbReference type="SMR" id="Q0AZF5"/>
<dbReference type="STRING" id="335541.Swol_0566"/>
<dbReference type="KEGG" id="swo:Swol_0566"/>
<dbReference type="eggNOG" id="COG0190">
    <property type="taxonomic scope" value="Bacteria"/>
</dbReference>
<dbReference type="HOGENOM" id="CLU_034045_1_2_9"/>
<dbReference type="OrthoDB" id="9803580at2"/>
<dbReference type="UniPathway" id="UPA00193"/>
<dbReference type="Proteomes" id="UP000001968">
    <property type="component" value="Chromosome"/>
</dbReference>
<dbReference type="GO" id="GO:0005829">
    <property type="term" value="C:cytosol"/>
    <property type="evidence" value="ECO:0007669"/>
    <property type="project" value="TreeGrafter"/>
</dbReference>
<dbReference type="GO" id="GO:0004477">
    <property type="term" value="F:methenyltetrahydrofolate cyclohydrolase activity"/>
    <property type="evidence" value="ECO:0007669"/>
    <property type="project" value="UniProtKB-UniRule"/>
</dbReference>
<dbReference type="GO" id="GO:0004488">
    <property type="term" value="F:methylenetetrahydrofolate dehydrogenase (NADP+) activity"/>
    <property type="evidence" value="ECO:0007669"/>
    <property type="project" value="UniProtKB-UniRule"/>
</dbReference>
<dbReference type="GO" id="GO:0000105">
    <property type="term" value="P:L-histidine biosynthetic process"/>
    <property type="evidence" value="ECO:0007669"/>
    <property type="project" value="UniProtKB-KW"/>
</dbReference>
<dbReference type="GO" id="GO:0009086">
    <property type="term" value="P:methionine biosynthetic process"/>
    <property type="evidence" value="ECO:0007669"/>
    <property type="project" value="UniProtKB-KW"/>
</dbReference>
<dbReference type="GO" id="GO:0006164">
    <property type="term" value="P:purine nucleotide biosynthetic process"/>
    <property type="evidence" value="ECO:0007669"/>
    <property type="project" value="UniProtKB-KW"/>
</dbReference>
<dbReference type="GO" id="GO:0035999">
    <property type="term" value="P:tetrahydrofolate interconversion"/>
    <property type="evidence" value="ECO:0007669"/>
    <property type="project" value="UniProtKB-UniRule"/>
</dbReference>
<dbReference type="CDD" id="cd01080">
    <property type="entry name" value="NAD_bind_m-THF_DH_Cyclohyd"/>
    <property type="match status" value="1"/>
</dbReference>
<dbReference type="FunFam" id="3.40.50.10860:FF:000005">
    <property type="entry name" value="C-1-tetrahydrofolate synthase, cytoplasmic, putative"/>
    <property type="match status" value="1"/>
</dbReference>
<dbReference type="Gene3D" id="3.40.50.10860">
    <property type="entry name" value="Leucine Dehydrogenase, chain A, domain 1"/>
    <property type="match status" value="1"/>
</dbReference>
<dbReference type="Gene3D" id="3.40.50.720">
    <property type="entry name" value="NAD(P)-binding Rossmann-like Domain"/>
    <property type="match status" value="1"/>
</dbReference>
<dbReference type="HAMAP" id="MF_01576">
    <property type="entry name" value="THF_DHG_CYH"/>
    <property type="match status" value="1"/>
</dbReference>
<dbReference type="InterPro" id="IPR046346">
    <property type="entry name" value="Aminoacid_DH-like_N_sf"/>
</dbReference>
<dbReference type="InterPro" id="IPR036291">
    <property type="entry name" value="NAD(P)-bd_dom_sf"/>
</dbReference>
<dbReference type="InterPro" id="IPR000672">
    <property type="entry name" value="THF_DH/CycHdrlase"/>
</dbReference>
<dbReference type="InterPro" id="IPR020630">
    <property type="entry name" value="THF_DH/CycHdrlase_cat_dom"/>
</dbReference>
<dbReference type="InterPro" id="IPR020867">
    <property type="entry name" value="THF_DH/CycHdrlase_CS"/>
</dbReference>
<dbReference type="InterPro" id="IPR020631">
    <property type="entry name" value="THF_DH/CycHdrlase_NAD-bd_dom"/>
</dbReference>
<dbReference type="PANTHER" id="PTHR48099:SF5">
    <property type="entry name" value="C-1-TETRAHYDROFOLATE SYNTHASE, CYTOPLASMIC"/>
    <property type="match status" value="1"/>
</dbReference>
<dbReference type="PANTHER" id="PTHR48099">
    <property type="entry name" value="C-1-TETRAHYDROFOLATE SYNTHASE, CYTOPLASMIC-RELATED"/>
    <property type="match status" value="1"/>
</dbReference>
<dbReference type="Pfam" id="PF00763">
    <property type="entry name" value="THF_DHG_CYH"/>
    <property type="match status" value="1"/>
</dbReference>
<dbReference type="Pfam" id="PF02882">
    <property type="entry name" value="THF_DHG_CYH_C"/>
    <property type="match status" value="1"/>
</dbReference>
<dbReference type="PRINTS" id="PR00085">
    <property type="entry name" value="THFDHDRGNASE"/>
</dbReference>
<dbReference type="SUPFAM" id="SSF53223">
    <property type="entry name" value="Aminoacid dehydrogenase-like, N-terminal domain"/>
    <property type="match status" value="1"/>
</dbReference>
<dbReference type="SUPFAM" id="SSF51735">
    <property type="entry name" value="NAD(P)-binding Rossmann-fold domains"/>
    <property type="match status" value="1"/>
</dbReference>
<dbReference type="PROSITE" id="PS00766">
    <property type="entry name" value="THF_DHG_CYH_1"/>
    <property type="match status" value="1"/>
</dbReference>
<protein>
    <recommendedName>
        <fullName evidence="1">Bifunctional protein FolD 1</fullName>
    </recommendedName>
    <domain>
        <recommendedName>
            <fullName evidence="1">Methylenetetrahydrofolate dehydrogenase</fullName>
            <ecNumber evidence="1">1.5.1.5</ecNumber>
        </recommendedName>
    </domain>
    <domain>
        <recommendedName>
            <fullName evidence="1">Methenyltetrahydrofolate cyclohydrolase</fullName>
            <ecNumber evidence="1">3.5.4.9</ecNumber>
        </recommendedName>
    </domain>
</protein>
<sequence length="277" mass="29604">MEIISGSQIAQEIRQKLKEKNEREGISPCLAMILVGGQKEDLHYVGLKEKAATATGGKSRLLHLPEDTSQQELMAKIAELNQDEQVDGILLQLPLPAALEEQTDEILAAIRPDKDVDGFSLVNRGRMSGDRPGFISCAALACLEVIERFFPSLAGKKAVLVGDSFDLIIPLATIMIKRACQLSVLPSYEPGLASGADILVVEKGRAGIVQAEGLAPGVLIIDAGFYWGAGGVCGNVDRAALERQGFEARLLPVPGGMGPILIAKLMENLAQAARQKR</sequence>
<feature type="chain" id="PRO_0000268539" description="Bifunctional protein FolD 1">
    <location>
        <begin position="1"/>
        <end position="277"/>
    </location>
</feature>
<feature type="binding site" evidence="1">
    <location>
        <begin position="162"/>
        <end position="164"/>
    </location>
    <ligand>
        <name>NADP(+)</name>
        <dbReference type="ChEBI" id="CHEBI:58349"/>
    </ligand>
</feature>
<feature type="binding site" evidence="1">
    <location>
        <position position="187"/>
    </location>
    <ligand>
        <name>NADP(+)</name>
        <dbReference type="ChEBI" id="CHEBI:58349"/>
    </ligand>
</feature>
<accession>Q0AZF5</accession>
<comment type="function">
    <text evidence="1">Catalyzes the oxidation of 5,10-methylenetetrahydrofolate to 5,10-methenyltetrahydrofolate and then the hydrolysis of 5,10-methenyltetrahydrofolate to 10-formyltetrahydrofolate.</text>
</comment>
<comment type="catalytic activity">
    <reaction evidence="1">
        <text>(6R)-5,10-methylene-5,6,7,8-tetrahydrofolate + NADP(+) = (6R)-5,10-methenyltetrahydrofolate + NADPH</text>
        <dbReference type="Rhea" id="RHEA:22812"/>
        <dbReference type="ChEBI" id="CHEBI:15636"/>
        <dbReference type="ChEBI" id="CHEBI:57455"/>
        <dbReference type="ChEBI" id="CHEBI:57783"/>
        <dbReference type="ChEBI" id="CHEBI:58349"/>
        <dbReference type="EC" id="1.5.1.5"/>
    </reaction>
</comment>
<comment type="catalytic activity">
    <reaction evidence="1">
        <text>(6R)-5,10-methenyltetrahydrofolate + H2O = (6R)-10-formyltetrahydrofolate + H(+)</text>
        <dbReference type="Rhea" id="RHEA:23700"/>
        <dbReference type="ChEBI" id="CHEBI:15377"/>
        <dbReference type="ChEBI" id="CHEBI:15378"/>
        <dbReference type="ChEBI" id="CHEBI:57455"/>
        <dbReference type="ChEBI" id="CHEBI:195366"/>
        <dbReference type="EC" id="3.5.4.9"/>
    </reaction>
</comment>
<comment type="pathway">
    <text evidence="1">One-carbon metabolism; tetrahydrofolate interconversion.</text>
</comment>
<comment type="subunit">
    <text evidence="1">Homodimer.</text>
</comment>
<comment type="similarity">
    <text evidence="1">Belongs to the tetrahydrofolate dehydrogenase/cyclohydrolase family.</text>
</comment>
<gene>
    <name evidence="1" type="primary">folD1</name>
    <name type="ordered locus">Swol_0566</name>
</gene>
<name>FOLD1_SYNWW</name>
<proteinExistence type="inferred from homology"/>
<keyword id="KW-0028">Amino-acid biosynthesis</keyword>
<keyword id="KW-0368">Histidine biosynthesis</keyword>
<keyword id="KW-0378">Hydrolase</keyword>
<keyword id="KW-0486">Methionine biosynthesis</keyword>
<keyword id="KW-0511">Multifunctional enzyme</keyword>
<keyword id="KW-0521">NADP</keyword>
<keyword id="KW-0554">One-carbon metabolism</keyword>
<keyword id="KW-0560">Oxidoreductase</keyword>
<keyword id="KW-0658">Purine biosynthesis</keyword>
<keyword id="KW-1185">Reference proteome</keyword>
<organism>
    <name type="scientific">Syntrophomonas wolfei subsp. wolfei (strain DSM 2245B / Goettingen)</name>
    <dbReference type="NCBI Taxonomy" id="335541"/>
    <lineage>
        <taxon>Bacteria</taxon>
        <taxon>Bacillati</taxon>
        <taxon>Bacillota</taxon>
        <taxon>Clostridia</taxon>
        <taxon>Eubacteriales</taxon>
        <taxon>Syntrophomonadaceae</taxon>
        <taxon>Syntrophomonas</taxon>
    </lineage>
</organism>
<evidence type="ECO:0000255" key="1">
    <source>
        <dbReference type="HAMAP-Rule" id="MF_01576"/>
    </source>
</evidence>
<reference key="1">
    <citation type="journal article" date="2010" name="Environ. Microbiol.">
        <title>The genome of Syntrophomonas wolfei: new insights into syntrophic metabolism and biohydrogen production.</title>
        <authorList>
            <person name="Sieber J.R."/>
            <person name="Sims D.R."/>
            <person name="Han C."/>
            <person name="Kim E."/>
            <person name="Lykidis A."/>
            <person name="Lapidus A.L."/>
            <person name="McDonnald E."/>
            <person name="Rohlin L."/>
            <person name="Culley D.E."/>
            <person name="Gunsalus R."/>
            <person name="McInerney M.J."/>
        </authorList>
    </citation>
    <scope>NUCLEOTIDE SEQUENCE [LARGE SCALE GENOMIC DNA]</scope>
    <source>
        <strain>DSM 2245B / Goettingen</strain>
    </source>
</reference>